<dbReference type="EMBL" id="AL513382">
    <property type="protein sequence ID" value="CAD05989.1"/>
    <property type="molecule type" value="Genomic_DNA"/>
</dbReference>
<dbReference type="EMBL" id="AE014613">
    <property type="protein sequence ID" value="AAO70345.1"/>
    <property type="molecule type" value="Genomic_DNA"/>
</dbReference>
<dbReference type="EMBL" id="X82670">
    <property type="protein sequence ID" value="CAA57991.1"/>
    <property type="molecule type" value="Genomic_DNA"/>
</dbReference>
<dbReference type="EMBL" id="X92546">
    <property type="protein sequence ID" value="CAA63302.1"/>
    <property type="molecule type" value="Genomic_DNA"/>
</dbReference>
<dbReference type="PIR" id="S70219">
    <property type="entry name" value="S70219"/>
</dbReference>
<dbReference type="RefSeq" id="NP_457276.1">
    <property type="nucleotide sequence ID" value="NC_003198.1"/>
</dbReference>
<dbReference type="RefSeq" id="WP_000258814.1">
    <property type="nucleotide sequence ID" value="NZ_WSUR01000005.1"/>
</dbReference>
<dbReference type="SMR" id="P74849"/>
<dbReference type="STRING" id="220341.gene:17586899"/>
<dbReference type="KEGG" id="stt:t2784"/>
<dbReference type="KEGG" id="sty:STY3005"/>
<dbReference type="PATRIC" id="fig|220341.7.peg.3059"/>
<dbReference type="eggNOG" id="ENOG5032WWN">
    <property type="taxonomic scope" value="Bacteria"/>
</dbReference>
<dbReference type="HOGENOM" id="CLU_410980_0_0_6"/>
<dbReference type="OMA" id="DALDMCH"/>
<dbReference type="OrthoDB" id="6561939at2"/>
<dbReference type="PHI-base" id="PHI:637"/>
<dbReference type="Proteomes" id="UP000000541">
    <property type="component" value="Chromosome"/>
</dbReference>
<dbReference type="Proteomes" id="UP000002670">
    <property type="component" value="Chromosome"/>
</dbReference>
<dbReference type="GO" id="GO:0005576">
    <property type="term" value="C:extracellular region"/>
    <property type="evidence" value="ECO:0007669"/>
    <property type="project" value="UniProtKB-SubCell"/>
</dbReference>
<dbReference type="GO" id="GO:0003779">
    <property type="term" value="F:actin binding"/>
    <property type="evidence" value="ECO:0007669"/>
    <property type="project" value="UniProtKB-KW"/>
</dbReference>
<dbReference type="Gene3D" id="1.10.4110.10">
    <property type="entry name" value="Salmonella invasion protein A, C-terminal actin-binding domain"/>
    <property type="match status" value="1"/>
</dbReference>
<dbReference type="Gene3D" id="1.10.4150.10">
    <property type="entry name" value="SipA N-terminal domain-like"/>
    <property type="match status" value="1"/>
</dbReference>
<dbReference type="InterPro" id="IPR023224">
    <property type="entry name" value="SipA_actin-bd_C_sf"/>
</dbReference>
<dbReference type="InterPro" id="IPR054043">
    <property type="entry name" value="SipA_C"/>
</dbReference>
<dbReference type="InterPro" id="IPR023225">
    <property type="entry name" value="SipA_chaperone-bd"/>
</dbReference>
<dbReference type="InterPro" id="IPR015138">
    <property type="entry name" value="SipA_N"/>
</dbReference>
<dbReference type="NCBIfam" id="NF011903">
    <property type="entry name" value="PRK15376.1"/>
    <property type="match status" value="1"/>
</dbReference>
<dbReference type="Pfam" id="PF09052">
    <property type="entry name" value="SipA"/>
    <property type="match status" value="1"/>
</dbReference>
<dbReference type="Pfam" id="PF22163">
    <property type="entry name" value="SipA_2nd"/>
    <property type="match status" value="1"/>
</dbReference>
<dbReference type="SUPFAM" id="SSF101312">
    <property type="entry name" value="Invasion protein A (SipA) , C-terminal actin binding domain"/>
    <property type="match status" value="1"/>
</dbReference>
<dbReference type="SUPFAM" id="SSF140746">
    <property type="entry name" value="SipA N-terminal domain-like"/>
    <property type="match status" value="1"/>
</dbReference>
<comment type="function">
    <text evidence="1">Actin-binding protein that interferes with host cell actin cytoskeleton. It stimulates actin polymerization and counteracts F-actin destabilizing proteins. Potentiates SipC activity; both are required for an efficient bacterial internalization (By similarity).</text>
</comment>
<comment type="subcellular location">
    <subcellularLocation>
        <location evidence="3">Secreted</location>
    </subcellularLocation>
    <text>Secreted via the type III secretion system 1 (SPI-1 T3SS).</text>
</comment>
<comment type="similarity">
    <text evidence="4">Belongs to the SipA/IpaA family.</text>
</comment>
<feature type="chain" id="PRO_0000221450" description="Cell invasion protein SipA">
    <location>
        <begin position="1"/>
        <end position="685"/>
    </location>
</feature>
<feature type="region of interest" description="Disordered" evidence="2">
    <location>
        <begin position="265"/>
        <end position="386"/>
    </location>
</feature>
<feature type="region of interest" description="Disordered" evidence="2">
    <location>
        <begin position="402"/>
        <end position="432"/>
    </location>
</feature>
<feature type="region of interest" description="Actin-binding and polymerization">
    <location>
        <begin position="497"/>
        <end position="669"/>
    </location>
</feature>
<feature type="compositionally biased region" description="Low complexity" evidence="2">
    <location>
        <begin position="291"/>
        <end position="304"/>
    </location>
</feature>
<feature type="compositionally biased region" description="Basic and acidic residues" evidence="2">
    <location>
        <begin position="315"/>
        <end position="337"/>
    </location>
</feature>
<feature type="compositionally biased region" description="Polar residues" evidence="2">
    <location>
        <begin position="369"/>
        <end position="385"/>
    </location>
</feature>
<feature type="compositionally biased region" description="Low complexity" evidence="2">
    <location>
        <begin position="417"/>
        <end position="429"/>
    </location>
</feature>
<name>SIPA_SALTI</name>
<accession>P74849</accession>
<accession>Q56137</accession>
<accession>Q7C7N4</accession>
<accession>Q8Z494</accession>
<gene>
    <name type="primary">sipA</name>
    <name type="synonym">sspA</name>
    <name type="ordered locus">STY3005</name>
    <name type="ordered locus">t2784</name>
</gene>
<sequence length="685" mass="73940">MVTSVRTQPPVIMPGMQTEIKTQATNLAANLSAVRESATATLSGEIKGQQLEDFPALIKQASLDALFKCGKDAEALKEVFTNSNNVAGKKAIMEFAGLFRSALNATSDSPEAKTLLMKVGAEYTAQIIKDGLKEKSAFGPWLPETKKAEAKLENLEKQLLDIIKNNTGGELSKLSTNLVMQEVMPYIASCIEHNFGCTLDPLTRSSLTQLVDKAAAKAVEALDMCHQKLTQEQGTSVGREARHLEMQTLIPLLLRNVFAQIPADKLPDPKIPEPAAGPVPDGGKKAEPTGINININIDSSNHSVDNSKHINNSRSHVDNSQRHIDNSNHDNSRKTIDNSRTFIDNSQRHGESHHSTNSSNVSHSHSRVDSTTHQTETAHSASTGTIDHGIAGKIDVTAHATAEAVTNSSSESKDGKVVTSEKGTTGETTSFDEVDGVTSKSIIGKPLQATVHGVDDNKQQSQTAEIVNVKPLASQLAGVENVKIDTLQSDSTVITGNKAGTTDNDNSQTDKTGPFSGLKFKQNSFLSTVPSVTNMHSIHFNAREAFLGVIRKALEPDASTPFPVRRAFDGLRGEILPNDTIKSAALKAQCSDIDKHPELKAKMETLKEVITHHPQKEKLAEIALQFAREAGLTRQKGETDYVLSNVLDGLIGDGSWRAGPAYESYLNKPGVDRVITTVDGLHMQR</sequence>
<keyword id="KW-0009">Actin-binding</keyword>
<keyword id="KW-0964">Secreted</keyword>
<keyword id="KW-0843">Virulence</keyword>
<evidence type="ECO:0000250" key="1"/>
<evidence type="ECO:0000256" key="2">
    <source>
        <dbReference type="SAM" id="MobiDB-lite"/>
    </source>
</evidence>
<evidence type="ECO:0000269" key="3">
    <source>
    </source>
</evidence>
<evidence type="ECO:0000305" key="4"/>
<reference key="1">
    <citation type="journal article" date="2001" name="Nature">
        <title>Complete genome sequence of a multiple drug resistant Salmonella enterica serovar Typhi CT18.</title>
        <authorList>
            <person name="Parkhill J."/>
            <person name="Dougan G."/>
            <person name="James K.D."/>
            <person name="Thomson N.R."/>
            <person name="Pickard D."/>
            <person name="Wain J."/>
            <person name="Churcher C.M."/>
            <person name="Mungall K.L."/>
            <person name="Bentley S.D."/>
            <person name="Holden M.T.G."/>
            <person name="Sebaihia M."/>
            <person name="Baker S."/>
            <person name="Basham D."/>
            <person name="Brooks K."/>
            <person name="Chillingworth T."/>
            <person name="Connerton P."/>
            <person name="Cronin A."/>
            <person name="Davis P."/>
            <person name="Davies R.M."/>
            <person name="Dowd L."/>
            <person name="White N."/>
            <person name="Farrar J."/>
            <person name="Feltwell T."/>
            <person name="Hamlin N."/>
            <person name="Haque A."/>
            <person name="Hien T.T."/>
            <person name="Holroyd S."/>
            <person name="Jagels K."/>
            <person name="Krogh A."/>
            <person name="Larsen T.S."/>
            <person name="Leather S."/>
            <person name="Moule S."/>
            <person name="O'Gaora P."/>
            <person name="Parry C."/>
            <person name="Quail M.A."/>
            <person name="Rutherford K.M."/>
            <person name="Simmonds M."/>
            <person name="Skelton J."/>
            <person name="Stevens K."/>
            <person name="Whitehead S."/>
            <person name="Barrell B.G."/>
        </authorList>
    </citation>
    <scope>NUCLEOTIDE SEQUENCE [LARGE SCALE GENOMIC DNA]</scope>
    <source>
        <strain>CT18</strain>
    </source>
</reference>
<reference key="2">
    <citation type="journal article" date="2003" name="J. Bacteriol.">
        <title>Comparative genomics of Salmonella enterica serovar Typhi strains Ty2 and CT18.</title>
        <authorList>
            <person name="Deng W."/>
            <person name="Liou S.-R."/>
            <person name="Plunkett G. III"/>
            <person name="Mayhew G.F."/>
            <person name="Rose D.J."/>
            <person name="Burland V."/>
            <person name="Kodoyianni V."/>
            <person name="Schwartz D.C."/>
            <person name="Blattner F.R."/>
        </authorList>
    </citation>
    <scope>NUCLEOTIDE SEQUENCE [LARGE SCALE GENOMIC DNA]</scope>
    <source>
        <strain>ATCC 700931 / Ty2</strain>
    </source>
</reference>
<reference key="3">
    <citation type="journal article" date="1995" name="Mol. Microbiol.">
        <title>Functional conservation of the Salmonella and Shigella effectors of entry into epithelial cells.</title>
        <authorList>
            <person name="Hermant D."/>
            <person name="Menard R."/>
            <person name="Arricau N."/>
            <person name="Parsot C."/>
            <person name="Popoff M.Y."/>
        </authorList>
    </citation>
    <scope>NUCLEOTIDE SEQUENCE [GENOMIC DNA] OF 1-235</scope>
    <source>
        <strain>ATCC 700931 / Ty2</strain>
    </source>
</reference>
<reference key="4">
    <citation type="journal article" date="1997" name="Res. Microbiol.">
        <title>Molecular characterization of the Salmonella typhi StpA protein that is related to both Yersinia YopE cytotoxin and YopH tyrosine phosphatase.</title>
        <authorList>
            <person name="Arricau N."/>
            <person name="Hermant D."/>
            <person name="Waxin H."/>
            <person name="Popoff M.Y."/>
        </authorList>
    </citation>
    <scope>NUCLEOTIDE SEQUENCE [GENOMIC DNA] OF 236-685</scope>
    <source>
        <strain>ATCC 700931 / Ty2</strain>
    </source>
</reference>
<reference key="5">
    <citation type="journal article" date="2001" name="Microbiol. Immunol.">
        <title>Vi-Suppressed wild strain Salmonella typhi cultured in high osmolarity is hyperinvasive toward epithelial cells and destructive of Peyer's patches.</title>
        <authorList>
            <person name="Zhao L."/>
            <person name="Ezak T."/>
            <person name="Li Z.-Y."/>
            <person name="Kawamura Y."/>
            <person name="Hirose K."/>
            <person name="Watanabe H."/>
        </authorList>
    </citation>
    <scope>SUBCELLULAR LOCATION</scope>
    <source>
        <strain>GIFU 10007</strain>
    </source>
</reference>
<organism>
    <name type="scientific">Salmonella typhi</name>
    <dbReference type="NCBI Taxonomy" id="90370"/>
    <lineage>
        <taxon>Bacteria</taxon>
        <taxon>Pseudomonadati</taxon>
        <taxon>Pseudomonadota</taxon>
        <taxon>Gammaproteobacteria</taxon>
        <taxon>Enterobacterales</taxon>
        <taxon>Enterobacteriaceae</taxon>
        <taxon>Salmonella</taxon>
    </lineage>
</organism>
<protein>
    <recommendedName>
        <fullName>Cell invasion protein SipA</fullName>
    </recommendedName>
    <alternativeName>
        <fullName>Effector protein SipA</fullName>
    </alternativeName>
</protein>
<proteinExistence type="inferred from homology"/>